<organism>
    <name type="scientific">Bacillus cereus (strain Q1)</name>
    <dbReference type="NCBI Taxonomy" id="361100"/>
    <lineage>
        <taxon>Bacteria</taxon>
        <taxon>Bacillati</taxon>
        <taxon>Bacillota</taxon>
        <taxon>Bacilli</taxon>
        <taxon>Bacillales</taxon>
        <taxon>Bacillaceae</taxon>
        <taxon>Bacillus</taxon>
        <taxon>Bacillus cereus group</taxon>
    </lineage>
</organism>
<evidence type="ECO:0000255" key="1">
    <source>
        <dbReference type="HAMAP-Rule" id="MF_00824"/>
    </source>
</evidence>
<keyword id="KW-0012">Acyltransferase</keyword>
<keyword id="KW-0808">Transferase</keyword>
<gene>
    <name type="ordered locus">BCQ_3708</name>
</gene>
<dbReference type="EC" id="2.3.1.-" evidence="1"/>
<dbReference type="EMBL" id="CP000227">
    <property type="protein sequence ID" value="ACM14136.1"/>
    <property type="molecule type" value="Genomic_DNA"/>
</dbReference>
<dbReference type="SMR" id="B9IVZ9"/>
<dbReference type="KEGG" id="bcq:BCQ_3708"/>
<dbReference type="HOGENOM" id="CLU_136634_0_0_9"/>
<dbReference type="Proteomes" id="UP000000441">
    <property type="component" value="Chromosome"/>
</dbReference>
<dbReference type="GO" id="GO:0016747">
    <property type="term" value="F:acyltransferase activity, transferring groups other than amino-acyl groups"/>
    <property type="evidence" value="ECO:0007669"/>
    <property type="project" value="UniProtKB-UniRule"/>
</dbReference>
<dbReference type="CDD" id="cd04301">
    <property type="entry name" value="NAT_SF"/>
    <property type="match status" value="1"/>
</dbReference>
<dbReference type="Gene3D" id="3.40.630.30">
    <property type="match status" value="1"/>
</dbReference>
<dbReference type="HAMAP" id="MF_00824">
    <property type="entry name" value="Acetyltransf_YlbP"/>
    <property type="match status" value="1"/>
</dbReference>
<dbReference type="InterPro" id="IPR016181">
    <property type="entry name" value="Acyl_CoA_acyltransferase"/>
</dbReference>
<dbReference type="InterPro" id="IPR000182">
    <property type="entry name" value="GNAT_dom"/>
</dbReference>
<dbReference type="InterPro" id="IPR017274">
    <property type="entry name" value="YlbP"/>
</dbReference>
<dbReference type="NCBIfam" id="NF010241">
    <property type="entry name" value="PRK13688.1"/>
    <property type="match status" value="1"/>
</dbReference>
<dbReference type="Pfam" id="PF00583">
    <property type="entry name" value="Acetyltransf_1"/>
    <property type="match status" value="1"/>
</dbReference>
<dbReference type="PIRSF" id="PIRSF037732">
    <property type="entry name" value="YlbP_prd"/>
    <property type="match status" value="1"/>
</dbReference>
<dbReference type="SUPFAM" id="SSF55729">
    <property type="entry name" value="Acyl-CoA N-acyltransferases (Nat)"/>
    <property type="match status" value="1"/>
</dbReference>
<reference key="1">
    <citation type="journal article" date="2009" name="J. Bacteriol.">
        <title>Complete genome sequence of the extremophilic Bacillus cereus strain Q1 with industrial applications.</title>
        <authorList>
            <person name="Xiong Z."/>
            <person name="Jiang Y."/>
            <person name="Qi D."/>
            <person name="Lu H."/>
            <person name="Yang F."/>
            <person name="Yang J."/>
            <person name="Chen L."/>
            <person name="Sun L."/>
            <person name="Xu X."/>
            <person name="Xue Y."/>
            <person name="Zhu Y."/>
            <person name="Jin Q."/>
        </authorList>
    </citation>
    <scope>NUCLEOTIDE SEQUENCE [LARGE SCALE GENOMIC DNA]</scope>
    <source>
        <strain>Q1</strain>
    </source>
</reference>
<sequence>MGFPKVERLLINYKTLDEFKKFKGCGAQELSMLEELQANIIENNSESPFYGIYYGGSLIARMSLYMKRNGGEPFEITGTYLELYKLEVLPTFQKQGFGEMLVNYAKGLQFPIKTIARIHSAGFWDKLNFQPVSVPDGDFYVWHPETNLNAVTNEESA</sequence>
<proteinExistence type="inferred from homology"/>
<feature type="chain" id="PRO_1000148764" description="Uncharacterized N-acetyltransferase BCQ_3708">
    <location>
        <begin position="1"/>
        <end position="157"/>
    </location>
</feature>
<feature type="domain" description="N-acetyltransferase" evidence="1">
    <location>
        <begin position="9"/>
        <end position="146"/>
    </location>
</feature>
<accession>B9IVZ9</accession>
<protein>
    <recommendedName>
        <fullName evidence="1">Uncharacterized N-acetyltransferase BCQ_3708</fullName>
        <ecNumber evidence="1">2.3.1.-</ecNumber>
    </recommendedName>
</protein>
<name>Y3708_BACCQ</name>